<evidence type="ECO:0000250" key="1"/>
<evidence type="ECO:0000255" key="2">
    <source>
        <dbReference type="HAMAP-Rule" id="MF_00103"/>
    </source>
</evidence>
<proteinExistence type="inferred from homology"/>
<gene>
    <name evidence="2" type="primary">mutM</name>
    <name evidence="2" type="synonym">fpg</name>
    <name type="ordered locus">YPDSF_3853</name>
</gene>
<dbReference type="EC" id="3.2.2.23" evidence="2"/>
<dbReference type="EC" id="4.2.99.18" evidence="2"/>
<dbReference type="EMBL" id="CP000668">
    <property type="protein sequence ID" value="ABP42196.1"/>
    <property type="molecule type" value="Genomic_DNA"/>
</dbReference>
<dbReference type="RefSeq" id="WP_011906473.1">
    <property type="nucleotide sequence ID" value="NZ_CP009715.1"/>
</dbReference>
<dbReference type="SMR" id="A4TSD4"/>
<dbReference type="KEGG" id="ypp:YPDSF_3853"/>
<dbReference type="PATRIC" id="fig|386656.14.peg.665"/>
<dbReference type="GO" id="GO:0034039">
    <property type="term" value="F:8-oxo-7,8-dihydroguanine DNA N-glycosylase activity"/>
    <property type="evidence" value="ECO:0007669"/>
    <property type="project" value="TreeGrafter"/>
</dbReference>
<dbReference type="GO" id="GO:0140078">
    <property type="term" value="F:class I DNA-(apurinic or apyrimidinic site) endonuclease activity"/>
    <property type="evidence" value="ECO:0007669"/>
    <property type="project" value="UniProtKB-EC"/>
</dbReference>
<dbReference type="GO" id="GO:0003684">
    <property type="term" value="F:damaged DNA binding"/>
    <property type="evidence" value="ECO:0007669"/>
    <property type="project" value="InterPro"/>
</dbReference>
<dbReference type="GO" id="GO:0008270">
    <property type="term" value="F:zinc ion binding"/>
    <property type="evidence" value="ECO:0007669"/>
    <property type="project" value="UniProtKB-UniRule"/>
</dbReference>
<dbReference type="GO" id="GO:0006284">
    <property type="term" value="P:base-excision repair"/>
    <property type="evidence" value="ECO:0007669"/>
    <property type="project" value="InterPro"/>
</dbReference>
<dbReference type="CDD" id="cd08966">
    <property type="entry name" value="EcFpg-like_N"/>
    <property type="match status" value="1"/>
</dbReference>
<dbReference type="FunFam" id="1.10.8.50:FF:000003">
    <property type="entry name" value="Formamidopyrimidine-DNA glycosylase"/>
    <property type="match status" value="1"/>
</dbReference>
<dbReference type="FunFam" id="3.20.190.10:FF:000001">
    <property type="entry name" value="Formamidopyrimidine-DNA glycosylase"/>
    <property type="match status" value="1"/>
</dbReference>
<dbReference type="Gene3D" id="1.10.8.50">
    <property type="match status" value="1"/>
</dbReference>
<dbReference type="Gene3D" id="3.20.190.10">
    <property type="entry name" value="MutM-like, N-terminal"/>
    <property type="match status" value="1"/>
</dbReference>
<dbReference type="HAMAP" id="MF_00103">
    <property type="entry name" value="Fapy_DNA_glycosyl"/>
    <property type="match status" value="1"/>
</dbReference>
<dbReference type="InterPro" id="IPR015886">
    <property type="entry name" value="DNA_glyclase/AP_lyase_DNA-bd"/>
</dbReference>
<dbReference type="InterPro" id="IPR015887">
    <property type="entry name" value="DNA_glyclase_Znf_dom_DNA_BS"/>
</dbReference>
<dbReference type="InterPro" id="IPR020629">
    <property type="entry name" value="Formamido-pyr_DNA_Glyclase"/>
</dbReference>
<dbReference type="InterPro" id="IPR012319">
    <property type="entry name" value="FPG_cat"/>
</dbReference>
<dbReference type="InterPro" id="IPR035937">
    <property type="entry name" value="MutM-like_N-ter"/>
</dbReference>
<dbReference type="InterPro" id="IPR010979">
    <property type="entry name" value="Ribosomal_uS13-like_H2TH"/>
</dbReference>
<dbReference type="InterPro" id="IPR000214">
    <property type="entry name" value="Znf_DNA_glyclase/AP_lyase"/>
</dbReference>
<dbReference type="InterPro" id="IPR010663">
    <property type="entry name" value="Znf_FPG/IleRS"/>
</dbReference>
<dbReference type="NCBIfam" id="TIGR00577">
    <property type="entry name" value="fpg"/>
    <property type="match status" value="1"/>
</dbReference>
<dbReference type="NCBIfam" id="NF002211">
    <property type="entry name" value="PRK01103.1"/>
    <property type="match status" value="1"/>
</dbReference>
<dbReference type="PANTHER" id="PTHR22993">
    <property type="entry name" value="FORMAMIDOPYRIMIDINE-DNA GLYCOSYLASE"/>
    <property type="match status" value="1"/>
</dbReference>
<dbReference type="PANTHER" id="PTHR22993:SF9">
    <property type="entry name" value="FORMAMIDOPYRIMIDINE-DNA GLYCOSYLASE"/>
    <property type="match status" value="1"/>
</dbReference>
<dbReference type="Pfam" id="PF01149">
    <property type="entry name" value="Fapy_DNA_glyco"/>
    <property type="match status" value="1"/>
</dbReference>
<dbReference type="Pfam" id="PF06831">
    <property type="entry name" value="H2TH"/>
    <property type="match status" value="1"/>
</dbReference>
<dbReference type="Pfam" id="PF06827">
    <property type="entry name" value="zf-FPG_IleRS"/>
    <property type="match status" value="1"/>
</dbReference>
<dbReference type="SMART" id="SM00898">
    <property type="entry name" value="Fapy_DNA_glyco"/>
    <property type="match status" value="1"/>
</dbReference>
<dbReference type="SMART" id="SM01232">
    <property type="entry name" value="H2TH"/>
    <property type="match status" value="1"/>
</dbReference>
<dbReference type="SUPFAM" id="SSF57716">
    <property type="entry name" value="Glucocorticoid receptor-like (DNA-binding domain)"/>
    <property type="match status" value="1"/>
</dbReference>
<dbReference type="SUPFAM" id="SSF81624">
    <property type="entry name" value="N-terminal domain of MutM-like DNA repair proteins"/>
    <property type="match status" value="1"/>
</dbReference>
<dbReference type="SUPFAM" id="SSF46946">
    <property type="entry name" value="S13-like H2TH domain"/>
    <property type="match status" value="1"/>
</dbReference>
<dbReference type="PROSITE" id="PS51068">
    <property type="entry name" value="FPG_CAT"/>
    <property type="match status" value="1"/>
</dbReference>
<dbReference type="PROSITE" id="PS01242">
    <property type="entry name" value="ZF_FPG_1"/>
    <property type="match status" value="1"/>
</dbReference>
<dbReference type="PROSITE" id="PS51066">
    <property type="entry name" value="ZF_FPG_2"/>
    <property type="match status" value="1"/>
</dbReference>
<name>FPG_YERPP</name>
<feature type="initiator methionine" description="Removed" evidence="1">
    <location>
        <position position="1"/>
    </location>
</feature>
<feature type="chain" id="PRO_1000008794" description="Formamidopyrimidine-DNA glycosylase">
    <location>
        <begin position="2"/>
        <end position="278"/>
    </location>
</feature>
<feature type="zinc finger region" description="FPG-type" evidence="2">
    <location>
        <begin position="235"/>
        <end position="269"/>
    </location>
</feature>
<feature type="active site" description="Schiff-base intermediate with DNA" evidence="2">
    <location>
        <position position="2"/>
    </location>
</feature>
<feature type="active site" description="Proton donor" evidence="2">
    <location>
        <position position="3"/>
    </location>
</feature>
<feature type="active site" description="Proton donor; for beta-elimination activity" evidence="2">
    <location>
        <position position="57"/>
    </location>
</feature>
<feature type="active site" description="Proton donor; for delta-elimination activity" evidence="2">
    <location>
        <position position="259"/>
    </location>
</feature>
<feature type="binding site" evidence="2">
    <location>
        <position position="90"/>
    </location>
    <ligand>
        <name>DNA</name>
        <dbReference type="ChEBI" id="CHEBI:16991"/>
    </ligand>
</feature>
<feature type="binding site" evidence="2">
    <location>
        <position position="109"/>
    </location>
    <ligand>
        <name>DNA</name>
        <dbReference type="ChEBI" id="CHEBI:16991"/>
    </ligand>
</feature>
<feature type="binding site" evidence="2">
    <location>
        <position position="150"/>
    </location>
    <ligand>
        <name>DNA</name>
        <dbReference type="ChEBI" id="CHEBI:16991"/>
    </ligand>
</feature>
<comment type="function">
    <text evidence="2">Involved in base excision repair of DNA damaged by oxidation or by mutagenic agents. Acts as a DNA glycosylase that recognizes and removes damaged bases. Has a preference for oxidized purines, such as 7,8-dihydro-8-oxoguanine (8-oxoG). Has AP (apurinic/apyrimidinic) lyase activity and introduces nicks in the DNA strand. Cleaves the DNA backbone by beta-delta elimination to generate a single-strand break at the site of the removed base with both 3'- and 5'-phosphates.</text>
</comment>
<comment type="catalytic activity">
    <reaction evidence="2">
        <text>Hydrolysis of DNA containing ring-opened 7-methylguanine residues, releasing 2,6-diamino-4-hydroxy-5-(N-methyl)formamidopyrimidine.</text>
        <dbReference type="EC" id="3.2.2.23"/>
    </reaction>
</comment>
<comment type="catalytic activity">
    <reaction evidence="2">
        <text>2'-deoxyribonucleotide-(2'-deoxyribose 5'-phosphate)-2'-deoxyribonucleotide-DNA = a 3'-end 2'-deoxyribonucleotide-(2,3-dehydro-2,3-deoxyribose 5'-phosphate)-DNA + a 5'-end 5'-phospho-2'-deoxyribonucleoside-DNA + H(+)</text>
        <dbReference type="Rhea" id="RHEA:66592"/>
        <dbReference type="Rhea" id="RHEA-COMP:13180"/>
        <dbReference type="Rhea" id="RHEA-COMP:16897"/>
        <dbReference type="Rhea" id="RHEA-COMP:17067"/>
        <dbReference type="ChEBI" id="CHEBI:15378"/>
        <dbReference type="ChEBI" id="CHEBI:136412"/>
        <dbReference type="ChEBI" id="CHEBI:157695"/>
        <dbReference type="ChEBI" id="CHEBI:167181"/>
        <dbReference type="EC" id="4.2.99.18"/>
    </reaction>
</comment>
<comment type="cofactor">
    <cofactor evidence="2">
        <name>Zn(2+)</name>
        <dbReference type="ChEBI" id="CHEBI:29105"/>
    </cofactor>
    <text evidence="2">Binds 1 zinc ion per subunit.</text>
</comment>
<comment type="subunit">
    <text evidence="2">Monomer.</text>
</comment>
<comment type="similarity">
    <text evidence="2">Belongs to the FPG family.</text>
</comment>
<sequence>MPELPEVETSRRGIEPYLVGQTILYAVVRNARLRWPVSDEILTLSDQPVLSVQRRAKYLLLELPKGWIIIHLGMSGSLRVLSEETAAEKHDHVDLVVSNGKILRYTDPRRFGAWLWAKDLETSNVLAHLGPEPLSDEFTAQYLFDKSRNKRTLIKPWLMDNKVVVGVGNIYASESLFAAGILPDRAAGSLTDAESVLLVATIKAVLLHSIEQGGTTLRDFLQSDGKPGYFAQELQVYGRAGEPCRQCGHPIEIAKHGQRSTFFCRHCQFRPIWPIMLW</sequence>
<reference key="1">
    <citation type="submission" date="2007-02" db="EMBL/GenBank/DDBJ databases">
        <title>Complete sequence of chromosome of Yersinia pestis Pestoides F.</title>
        <authorList>
            <consortium name="US DOE Joint Genome Institute"/>
            <person name="Copeland A."/>
            <person name="Lucas S."/>
            <person name="Lapidus A."/>
            <person name="Barry K."/>
            <person name="Detter J.C."/>
            <person name="Glavina del Rio T."/>
            <person name="Hammon N."/>
            <person name="Israni S."/>
            <person name="Dalin E."/>
            <person name="Tice H."/>
            <person name="Pitluck S."/>
            <person name="Di Bartolo G."/>
            <person name="Chain P."/>
            <person name="Malfatti S."/>
            <person name="Shin M."/>
            <person name="Vergez L."/>
            <person name="Schmutz J."/>
            <person name="Larimer F."/>
            <person name="Land M."/>
            <person name="Hauser L."/>
            <person name="Worsham P."/>
            <person name="Chu M."/>
            <person name="Bearden S."/>
            <person name="Garcia E."/>
            <person name="Richardson P."/>
        </authorList>
    </citation>
    <scope>NUCLEOTIDE SEQUENCE [LARGE SCALE GENOMIC DNA]</scope>
    <source>
        <strain>Pestoides F</strain>
    </source>
</reference>
<accession>A4TSD4</accession>
<keyword id="KW-0227">DNA damage</keyword>
<keyword id="KW-0234">DNA repair</keyword>
<keyword id="KW-0238">DNA-binding</keyword>
<keyword id="KW-0326">Glycosidase</keyword>
<keyword id="KW-0378">Hydrolase</keyword>
<keyword id="KW-0456">Lyase</keyword>
<keyword id="KW-0479">Metal-binding</keyword>
<keyword id="KW-0511">Multifunctional enzyme</keyword>
<keyword id="KW-0862">Zinc</keyword>
<keyword id="KW-0863">Zinc-finger</keyword>
<organism>
    <name type="scientific">Yersinia pestis (strain Pestoides F)</name>
    <dbReference type="NCBI Taxonomy" id="386656"/>
    <lineage>
        <taxon>Bacteria</taxon>
        <taxon>Pseudomonadati</taxon>
        <taxon>Pseudomonadota</taxon>
        <taxon>Gammaproteobacteria</taxon>
        <taxon>Enterobacterales</taxon>
        <taxon>Yersiniaceae</taxon>
        <taxon>Yersinia</taxon>
    </lineage>
</organism>
<protein>
    <recommendedName>
        <fullName evidence="2">Formamidopyrimidine-DNA glycosylase</fullName>
        <shortName evidence="2">Fapy-DNA glycosylase</shortName>
        <ecNumber evidence="2">3.2.2.23</ecNumber>
    </recommendedName>
    <alternativeName>
        <fullName evidence="2">DNA-(apurinic or apyrimidinic site) lyase MutM</fullName>
        <shortName evidence="2">AP lyase MutM</shortName>
        <ecNumber evidence="2">4.2.99.18</ecNumber>
    </alternativeName>
</protein>